<keyword id="KW-0001">2Fe-2S</keyword>
<keyword id="KW-0274">FAD</keyword>
<keyword id="KW-0285">Flavoprotein</keyword>
<keyword id="KW-0408">Iron</keyword>
<keyword id="KW-0411">Iron-sulfur</keyword>
<keyword id="KW-0479">Metal-binding</keyword>
<keyword id="KW-0500">Molybdenum</keyword>
<keyword id="KW-0520">NAD</keyword>
<keyword id="KW-0560">Oxidoreductase</keyword>
<keyword id="KW-1185">Reference proteome</keyword>
<evidence type="ECO:0000250" key="1"/>
<evidence type="ECO:0000250" key="2">
    <source>
        <dbReference type="UniProtKB" id="Q8GUQ8"/>
    </source>
</evidence>
<evidence type="ECO:0000255" key="3">
    <source>
        <dbReference type="PROSITE-ProRule" id="PRU00465"/>
    </source>
</evidence>
<evidence type="ECO:0000255" key="4">
    <source>
        <dbReference type="PROSITE-ProRule" id="PRU00718"/>
    </source>
</evidence>
<evidence type="ECO:0000269" key="5">
    <source>
    </source>
</evidence>
<evidence type="ECO:0000305" key="6"/>
<evidence type="ECO:0000305" key="7">
    <source>
    </source>
</evidence>
<sequence length="1353" mass="148762">MEQNEFMEAIMYVNGVRRVLPDGLAHMTLLEYLRDLGLTGTKLGCGEGGCGSCTVMVSSYDRESKTCVHYAVNACLAPLYSVEGMHVISIEGVGHRKLGLHPLQESLASSHGSQCGFCTPGFVMSMYALLRSSKNSPSEEEIEECLAGNLCRCTGYRPIIDAFRVFAKSDDALYSGLSSLSLQDGSNICPSTGKPCSCGSKTTSEAATCNEDRFQSISYSDIDGAKYTDKELIFPPELLLRKLAPLKLGGNEGITWYRPVSLQNLLELKANFPDAKLLVGNTEVGIEMRLKRLQYPVLISAAQVPELNALNVNDNGIEVGSALRLSELLRLFRKVVKERPAHETSACKAFIEQLKWFAGTQIRNVACIGGNICTASPISDLNPLWMASRAEFRIINCNGDVRSIPAKDFFLGYRKVDMGSNEILLSVFLPWTRPLEYVKEFKQAHRRDDDIAIVNGGMRVFLEEKGQQLFVSDASIVYGGVAPLSLRARNTEELLIGKNWNKCLLQDALKVIQSDVLIKEGAPGGMVEFRKSLTLSFFFKFFLWVTHHVNNVNPTIETFPPSHMSAVQLVPRFSRIGKQDYETVKQGTSVGLPEVHLSARMQVTGEAEYTDDTPLPPCTLHAALVLSKVPHARILSVDDSAAKSSSGFVGLFLAKDVPGNNMIGPIVADEELFATDVVTCVGQVIGVLVADTHENAKTAARKVDVRYQELPAILSIKEAINAKSFHPNTERRLRKGDVELCFQSGQCDRIIEGEVQMGGQEHFYLEPNGSLVWTIDGGNEVHMISSTQAPQQHQKYVSHVLGLPMSKVVCKTKRLGGGFGGKETRSAFIAAAASVPSYLLNRPVKLILDRDVDMMITGHRHSFVGKYKVGFTNEGKILALDLEIYNNGGNSMDLSLSNLERAMFHSDNVYEIPHVRIVGNVCFTNFPSNTAFRGFGGPQGMLITENWIQRIAAELDKIPEEIKEMNFQVEGSITHYFQSLQHCTLHQLWKELKVSSNFLKTRREADEFNSHNRWKKRGVAMVPTKFGISFTTKFMNQAGALVHVYTDGTVLVTHGGVEMGQGLHTKVAQVAATAFNILLSSVFVSETSTDKVPNASPTAASASSDMYGAAVLDACEQIIARMEPVASKHNFNTFSELASACYFQRIDLSAHGFHIVPELEFDWVSGKGNAYRYYTYGAAFAEVEIDTLTGDFHTRKADIMLDLGYSLNPTIDIGQIEGAFVQGLGWVALEELKWGDAAHKWIKPGSLLTCGPGSYKIPSINDMPFQLNVSLLKGNPNAKAIHSSKAVGEPPFFLAASAFFAIKEAIKAARSEVGLTNWFPLETPATPERIRMACFDEFSAPFANSDFCPKLSV</sequence>
<organism>
    <name type="scientific">Arabidopsis thaliana</name>
    <name type="common">Mouse-ear cress</name>
    <dbReference type="NCBI Taxonomy" id="3702"/>
    <lineage>
        <taxon>Eukaryota</taxon>
        <taxon>Viridiplantae</taxon>
        <taxon>Streptophyta</taxon>
        <taxon>Embryophyta</taxon>
        <taxon>Tracheophyta</taxon>
        <taxon>Spermatophyta</taxon>
        <taxon>Magnoliopsida</taxon>
        <taxon>eudicotyledons</taxon>
        <taxon>Gunneridae</taxon>
        <taxon>Pentapetalae</taxon>
        <taxon>rosids</taxon>
        <taxon>malvids</taxon>
        <taxon>Brassicales</taxon>
        <taxon>Brassicaceae</taxon>
        <taxon>Camelineae</taxon>
        <taxon>Arabidopsis</taxon>
    </lineage>
</organism>
<accession>F4JLI5</accession>
<accession>Q6R2R5</accession>
<accession>Q9SW45</accession>
<dbReference type="EC" id="1.17.1.4" evidence="2"/>
<dbReference type="EMBL" id="AY518202">
    <property type="protein sequence ID" value="AAR99079.1"/>
    <property type="molecule type" value="mRNA"/>
</dbReference>
<dbReference type="EMBL" id="AL079347">
    <property type="protein sequence ID" value="CAB45451.1"/>
    <property type="status" value="ALT_SEQ"/>
    <property type="molecule type" value="Genomic_DNA"/>
</dbReference>
<dbReference type="EMBL" id="AL161586">
    <property type="protein sequence ID" value="CAB80207.1"/>
    <property type="status" value="ALT_SEQ"/>
    <property type="molecule type" value="Genomic_DNA"/>
</dbReference>
<dbReference type="EMBL" id="CP002687">
    <property type="protein sequence ID" value="AEE86435.1"/>
    <property type="molecule type" value="Genomic_DNA"/>
</dbReference>
<dbReference type="PIR" id="T10236">
    <property type="entry name" value="T10236"/>
</dbReference>
<dbReference type="RefSeq" id="NP_195216.2">
    <property type="nucleotide sequence ID" value="NM_119656.3"/>
</dbReference>
<dbReference type="SMR" id="F4JLI5"/>
<dbReference type="FunCoup" id="F4JLI5">
    <property type="interactions" value="857"/>
</dbReference>
<dbReference type="STRING" id="3702.F4JLI5"/>
<dbReference type="PaxDb" id="3702-AT4G34900.1"/>
<dbReference type="ProteomicsDB" id="242524"/>
<dbReference type="EnsemblPlants" id="AT4G34900.1">
    <property type="protein sequence ID" value="AT4G34900.1"/>
    <property type="gene ID" value="AT4G34900"/>
</dbReference>
<dbReference type="GeneID" id="829642"/>
<dbReference type="Gramene" id="AT4G34900.1">
    <property type="protein sequence ID" value="AT4G34900.1"/>
    <property type="gene ID" value="AT4G34900"/>
</dbReference>
<dbReference type="KEGG" id="ath:AT4G34900"/>
<dbReference type="Araport" id="AT4G34900"/>
<dbReference type="TAIR" id="AT4G34900">
    <property type="gene designation" value="XDH2"/>
</dbReference>
<dbReference type="eggNOG" id="KOG0430">
    <property type="taxonomic scope" value="Eukaryota"/>
</dbReference>
<dbReference type="HOGENOM" id="CLU_001681_1_2_1"/>
<dbReference type="InParanoid" id="F4JLI5"/>
<dbReference type="PRO" id="PR:F4JLI5"/>
<dbReference type="Proteomes" id="UP000006548">
    <property type="component" value="Chromosome 4"/>
</dbReference>
<dbReference type="ExpressionAtlas" id="F4JLI5">
    <property type="expression patterns" value="baseline and differential"/>
</dbReference>
<dbReference type="GO" id="GO:0005886">
    <property type="term" value="C:plasma membrane"/>
    <property type="evidence" value="ECO:0007005"/>
    <property type="project" value="TAIR"/>
</dbReference>
<dbReference type="GO" id="GO:0051537">
    <property type="term" value="F:2 iron, 2 sulfur cluster binding"/>
    <property type="evidence" value="ECO:0007669"/>
    <property type="project" value="UniProtKB-KW"/>
</dbReference>
<dbReference type="GO" id="GO:0071949">
    <property type="term" value="F:FAD binding"/>
    <property type="evidence" value="ECO:0007669"/>
    <property type="project" value="InterPro"/>
</dbReference>
<dbReference type="GO" id="GO:0005506">
    <property type="term" value="F:iron ion binding"/>
    <property type="evidence" value="ECO:0007669"/>
    <property type="project" value="InterPro"/>
</dbReference>
<dbReference type="GO" id="GO:0004854">
    <property type="term" value="F:xanthine dehydrogenase activity"/>
    <property type="evidence" value="ECO:0007669"/>
    <property type="project" value="UniProtKB-EC"/>
</dbReference>
<dbReference type="GO" id="GO:0046110">
    <property type="term" value="P:xanthine metabolic process"/>
    <property type="evidence" value="ECO:0000315"/>
    <property type="project" value="UniProtKB"/>
</dbReference>
<dbReference type="FunFam" id="3.10.20.30:FF:000015">
    <property type="entry name" value="Aldehyde oxidase 1"/>
    <property type="match status" value="1"/>
</dbReference>
<dbReference type="FunFam" id="3.30.365.10:FF:000003">
    <property type="entry name" value="Aldehyde oxidase 1"/>
    <property type="match status" value="1"/>
</dbReference>
<dbReference type="FunFam" id="3.90.1170.50:FF:000001">
    <property type="entry name" value="Aldehyde oxidase 1"/>
    <property type="match status" value="1"/>
</dbReference>
<dbReference type="FunFam" id="1.10.150.120:FF:000012">
    <property type="entry name" value="Xanthine dehydrogenase 2"/>
    <property type="match status" value="1"/>
</dbReference>
<dbReference type="FunFam" id="3.30.365.10:FF:000004">
    <property type="entry name" value="Xanthine dehydrogenase oxidase"/>
    <property type="match status" value="1"/>
</dbReference>
<dbReference type="FunFam" id="3.30.390.50:FF:000001">
    <property type="entry name" value="Xanthine dehydrogenase oxidase"/>
    <property type="match status" value="1"/>
</dbReference>
<dbReference type="FunFam" id="3.30.43.10:FF:000001">
    <property type="entry name" value="Xanthine dehydrogenase/oxidase"/>
    <property type="match status" value="1"/>
</dbReference>
<dbReference type="FunFam" id="3.30.465.10:FF:000004">
    <property type="entry name" value="Xanthine dehydrogenase/oxidase"/>
    <property type="match status" value="1"/>
</dbReference>
<dbReference type="Gene3D" id="3.10.20.30">
    <property type="match status" value="1"/>
</dbReference>
<dbReference type="Gene3D" id="3.30.465.10">
    <property type="match status" value="1"/>
</dbReference>
<dbReference type="Gene3D" id="1.10.150.120">
    <property type="entry name" value="[2Fe-2S]-binding domain"/>
    <property type="match status" value="1"/>
</dbReference>
<dbReference type="Gene3D" id="3.90.1170.50">
    <property type="entry name" value="Aldehyde oxidase/xanthine dehydrogenase, a/b hammerhead"/>
    <property type="match status" value="1"/>
</dbReference>
<dbReference type="Gene3D" id="3.30.365.10">
    <property type="entry name" value="Aldehyde oxidase/xanthine dehydrogenase, molybdopterin binding domain"/>
    <property type="match status" value="4"/>
</dbReference>
<dbReference type="Gene3D" id="3.30.390.50">
    <property type="entry name" value="CO dehydrogenase flavoprotein, C-terminal domain"/>
    <property type="match status" value="1"/>
</dbReference>
<dbReference type="Gene3D" id="3.30.43.10">
    <property type="entry name" value="Uridine Diphospho-n-acetylenolpyruvylglucosamine Reductase, domain 2"/>
    <property type="match status" value="1"/>
</dbReference>
<dbReference type="InterPro" id="IPR002888">
    <property type="entry name" value="2Fe-2S-bd"/>
</dbReference>
<dbReference type="InterPro" id="IPR036884">
    <property type="entry name" value="2Fe-2S-bd_dom_sf"/>
</dbReference>
<dbReference type="InterPro" id="IPR036010">
    <property type="entry name" value="2Fe-2S_ferredoxin-like_sf"/>
</dbReference>
<dbReference type="InterPro" id="IPR001041">
    <property type="entry name" value="2Fe-2S_ferredoxin-type"/>
</dbReference>
<dbReference type="InterPro" id="IPR006058">
    <property type="entry name" value="2Fe2S_fd_BS"/>
</dbReference>
<dbReference type="InterPro" id="IPR000674">
    <property type="entry name" value="Ald_Oxase/Xan_DH_a/b"/>
</dbReference>
<dbReference type="InterPro" id="IPR036856">
    <property type="entry name" value="Ald_Oxase/Xan_DH_a/b_sf"/>
</dbReference>
<dbReference type="InterPro" id="IPR016208">
    <property type="entry name" value="Ald_Oxase/xanthine_DH-like"/>
</dbReference>
<dbReference type="InterPro" id="IPR008274">
    <property type="entry name" value="AldOxase/xan_DH_MoCoBD1"/>
</dbReference>
<dbReference type="InterPro" id="IPR046867">
    <property type="entry name" value="AldOxase/xan_DH_MoCoBD2"/>
</dbReference>
<dbReference type="InterPro" id="IPR037165">
    <property type="entry name" value="AldOxase/xan_DH_Mopterin-bd_sf"/>
</dbReference>
<dbReference type="InterPro" id="IPR012675">
    <property type="entry name" value="Beta-grasp_dom_sf"/>
</dbReference>
<dbReference type="InterPro" id="IPR005107">
    <property type="entry name" value="CO_DH_flav_C"/>
</dbReference>
<dbReference type="InterPro" id="IPR036683">
    <property type="entry name" value="CO_DH_flav_C_dom_sf"/>
</dbReference>
<dbReference type="InterPro" id="IPR016166">
    <property type="entry name" value="FAD-bd_PCMH"/>
</dbReference>
<dbReference type="InterPro" id="IPR036318">
    <property type="entry name" value="FAD-bd_PCMH-like_sf"/>
</dbReference>
<dbReference type="InterPro" id="IPR016167">
    <property type="entry name" value="FAD-bd_PCMH_sub1"/>
</dbReference>
<dbReference type="InterPro" id="IPR016169">
    <property type="entry name" value="FAD-bd_PCMH_sub2"/>
</dbReference>
<dbReference type="InterPro" id="IPR002346">
    <property type="entry name" value="Mopterin_DH_FAD-bd"/>
</dbReference>
<dbReference type="PANTHER" id="PTHR45444">
    <property type="entry name" value="XANTHINE DEHYDROGENASE"/>
    <property type="match status" value="1"/>
</dbReference>
<dbReference type="PANTHER" id="PTHR45444:SF3">
    <property type="entry name" value="XANTHINE DEHYDROGENASE"/>
    <property type="match status" value="1"/>
</dbReference>
<dbReference type="Pfam" id="PF01315">
    <property type="entry name" value="Ald_Xan_dh_C"/>
    <property type="match status" value="1"/>
</dbReference>
<dbReference type="Pfam" id="PF03450">
    <property type="entry name" value="CO_deh_flav_C"/>
    <property type="match status" value="1"/>
</dbReference>
<dbReference type="Pfam" id="PF00941">
    <property type="entry name" value="FAD_binding_5"/>
    <property type="match status" value="1"/>
</dbReference>
<dbReference type="Pfam" id="PF00111">
    <property type="entry name" value="Fer2"/>
    <property type="match status" value="1"/>
</dbReference>
<dbReference type="Pfam" id="PF01799">
    <property type="entry name" value="Fer2_2"/>
    <property type="match status" value="1"/>
</dbReference>
<dbReference type="Pfam" id="PF02738">
    <property type="entry name" value="MoCoBD_1"/>
    <property type="match status" value="1"/>
</dbReference>
<dbReference type="Pfam" id="PF20256">
    <property type="entry name" value="MoCoBD_2"/>
    <property type="match status" value="1"/>
</dbReference>
<dbReference type="PIRSF" id="PIRSF000127">
    <property type="entry name" value="Xanthine_DH"/>
    <property type="match status" value="1"/>
</dbReference>
<dbReference type="SMART" id="SM01008">
    <property type="entry name" value="Ald_Xan_dh_C"/>
    <property type="match status" value="1"/>
</dbReference>
<dbReference type="SMART" id="SM01092">
    <property type="entry name" value="CO_deh_flav_C"/>
    <property type="match status" value="1"/>
</dbReference>
<dbReference type="SUPFAM" id="SSF54292">
    <property type="entry name" value="2Fe-2S ferredoxin-like"/>
    <property type="match status" value="1"/>
</dbReference>
<dbReference type="SUPFAM" id="SSF55447">
    <property type="entry name" value="CO dehydrogenase flavoprotein C-terminal domain-like"/>
    <property type="match status" value="1"/>
</dbReference>
<dbReference type="SUPFAM" id="SSF47741">
    <property type="entry name" value="CO dehydrogenase ISP C-domain like"/>
    <property type="match status" value="1"/>
</dbReference>
<dbReference type="SUPFAM" id="SSF54665">
    <property type="entry name" value="CO dehydrogenase molybdoprotein N-domain-like"/>
    <property type="match status" value="1"/>
</dbReference>
<dbReference type="SUPFAM" id="SSF56176">
    <property type="entry name" value="FAD-binding/transporter-associated domain-like"/>
    <property type="match status" value="1"/>
</dbReference>
<dbReference type="SUPFAM" id="SSF56003">
    <property type="entry name" value="Molybdenum cofactor-binding domain"/>
    <property type="match status" value="1"/>
</dbReference>
<dbReference type="PROSITE" id="PS00197">
    <property type="entry name" value="2FE2S_FER_1"/>
    <property type="match status" value="1"/>
</dbReference>
<dbReference type="PROSITE" id="PS51085">
    <property type="entry name" value="2FE2S_FER_2"/>
    <property type="match status" value="1"/>
</dbReference>
<dbReference type="PROSITE" id="PS51387">
    <property type="entry name" value="FAD_PCMH"/>
    <property type="match status" value="1"/>
</dbReference>
<name>XDH2_ARATH</name>
<comment type="function">
    <text evidence="5">Key enzyme involved in purine catabolism. Catalyzes the oxidation of hypoxanthine to xanthine and the oxidation of xanthine to urate. Regulates the level of ureides and plays a role during plant growth and development and senescence.</text>
</comment>
<comment type="catalytic activity">
    <reaction evidence="2">
        <text>xanthine + NAD(+) + H2O = urate + NADH + H(+)</text>
        <dbReference type="Rhea" id="RHEA:16669"/>
        <dbReference type="ChEBI" id="CHEBI:15377"/>
        <dbReference type="ChEBI" id="CHEBI:15378"/>
        <dbReference type="ChEBI" id="CHEBI:17712"/>
        <dbReference type="ChEBI" id="CHEBI:17775"/>
        <dbReference type="ChEBI" id="CHEBI:57540"/>
        <dbReference type="ChEBI" id="CHEBI:57945"/>
        <dbReference type="EC" id="1.17.1.4"/>
    </reaction>
</comment>
<comment type="catalytic activity">
    <reaction evidence="2">
        <text>hypoxanthine + NAD(+) + H2O = xanthine + NADH + H(+)</text>
        <dbReference type="Rhea" id="RHEA:24670"/>
        <dbReference type="ChEBI" id="CHEBI:15377"/>
        <dbReference type="ChEBI" id="CHEBI:15378"/>
        <dbReference type="ChEBI" id="CHEBI:17368"/>
        <dbReference type="ChEBI" id="CHEBI:17712"/>
        <dbReference type="ChEBI" id="CHEBI:57540"/>
        <dbReference type="ChEBI" id="CHEBI:57945"/>
        <dbReference type="EC" id="1.17.1.4"/>
    </reaction>
</comment>
<comment type="cofactor">
    <cofactor evidence="1">
        <name>[2Fe-2S] cluster</name>
        <dbReference type="ChEBI" id="CHEBI:190135"/>
    </cofactor>
    <text evidence="1">Binds 2 [2Fe-2S] clusters.</text>
</comment>
<comment type="cofactor">
    <cofactor evidence="1">
        <name>FAD</name>
        <dbReference type="ChEBI" id="CHEBI:57692"/>
    </cofactor>
</comment>
<comment type="cofactor">
    <cofactor evidence="1">
        <name>Mo-molybdopterin</name>
        <dbReference type="ChEBI" id="CHEBI:71302"/>
    </cofactor>
    <text evidence="1">Binds 1 Mo-molybdopterin (Mo-MPT) cofactor per subunit.</text>
</comment>
<comment type="subunit">
    <text evidence="1">Homodimer.</text>
</comment>
<comment type="tissue specificity">
    <text>Expressed in roots, leaves, stems, flowers and siliques.</text>
</comment>
<comment type="miscellaneous">
    <text evidence="7">Plants silencing simultaneously XDH1 and XDH2 show reduced growth, impaired silique development, increased seed sterility, precocious senescence of mature leaves and overaccumulation of xanthine.</text>
</comment>
<comment type="similarity">
    <text evidence="6">Belongs to the xanthine dehydrogenase family.</text>
</comment>
<comment type="sequence caution" evidence="6">
    <conflict type="erroneous gene model prediction">
        <sequence resource="EMBL-CDS" id="CAB45451"/>
    </conflict>
</comment>
<comment type="sequence caution" evidence="6">
    <conflict type="erroneous gene model prediction">
        <sequence resource="EMBL-CDS" id="CAB80207"/>
    </conflict>
</comment>
<gene>
    <name type="primary">XDH2</name>
    <name type="ordered locus">At4g34900</name>
    <name type="ORF">T11I11.140</name>
</gene>
<feature type="chain" id="PRO_0000417458" description="Xanthine dehydrogenase 2">
    <location>
        <begin position="1"/>
        <end position="1353"/>
    </location>
</feature>
<feature type="domain" description="2Fe-2S ferredoxin-type" evidence="3">
    <location>
        <begin position="7"/>
        <end position="93"/>
    </location>
</feature>
<feature type="domain" description="FAD-binding PCMH-type" evidence="4">
    <location>
        <begin position="249"/>
        <end position="434"/>
    </location>
</feature>
<feature type="active site" description="Proton acceptor" evidence="1">
    <location>
        <position position="1289"/>
    </location>
</feature>
<feature type="binding site" evidence="3">
    <location>
        <position position="45"/>
    </location>
    <ligand>
        <name>[2Fe-2S] cluster</name>
        <dbReference type="ChEBI" id="CHEBI:190135"/>
        <label>1</label>
    </ligand>
</feature>
<feature type="binding site" evidence="3">
    <location>
        <position position="50"/>
    </location>
    <ligand>
        <name>[2Fe-2S] cluster</name>
        <dbReference type="ChEBI" id="CHEBI:190135"/>
        <label>1</label>
    </ligand>
</feature>
<feature type="binding site" evidence="3">
    <location>
        <position position="53"/>
    </location>
    <ligand>
        <name>[2Fe-2S] cluster</name>
        <dbReference type="ChEBI" id="CHEBI:190135"/>
        <label>1</label>
    </ligand>
</feature>
<feature type="binding site" evidence="3">
    <location>
        <position position="75"/>
    </location>
    <ligand>
        <name>[2Fe-2S] cluster</name>
        <dbReference type="ChEBI" id="CHEBI:190135"/>
        <label>1</label>
    </ligand>
</feature>
<feature type="binding site" evidence="3">
    <location>
        <position position="115"/>
    </location>
    <ligand>
        <name>[2Fe-2S] cluster</name>
        <dbReference type="ChEBI" id="CHEBI:190135"/>
        <label>2</label>
    </ligand>
</feature>
<feature type="binding site" evidence="3">
    <location>
        <position position="118"/>
    </location>
    <ligand>
        <name>[2Fe-2S] cluster</name>
        <dbReference type="ChEBI" id="CHEBI:190135"/>
        <label>2</label>
    </ligand>
</feature>
<feature type="binding site" evidence="3">
    <location>
        <position position="151"/>
    </location>
    <ligand>
        <name>[2Fe-2S] cluster</name>
        <dbReference type="ChEBI" id="CHEBI:190135"/>
        <label>2</label>
    </ligand>
</feature>
<feature type="binding site" evidence="3">
    <location>
        <position position="153"/>
    </location>
    <ligand>
        <name>[2Fe-2S] cluster</name>
        <dbReference type="ChEBI" id="CHEBI:190135"/>
        <label>2</label>
    </ligand>
</feature>
<feature type="binding site" evidence="1">
    <location>
        <begin position="277"/>
        <end position="284"/>
    </location>
    <ligand>
        <name>FAD</name>
        <dbReference type="ChEBI" id="CHEBI:57692"/>
    </ligand>
</feature>
<feature type="binding site" evidence="1">
    <location>
        <position position="357"/>
    </location>
    <ligand>
        <name>FAD</name>
        <dbReference type="ChEBI" id="CHEBI:57692"/>
    </ligand>
</feature>
<feature type="binding site" evidence="1">
    <location>
        <begin position="367"/>
        <end position="371"/>
    </location>
    <ligand>
        <name>FAD</name>
        <dbReference type="ChEBI" id="CHEBI:57692"/>
    </ligand>
</feature>
<feature type="binding site" evidence="1">
    <location>
        <position position="380"/>
    </location>
    <ligand>
        <name>FAD</name>
        <dbReference type="ChEBI" id="CHEBI:57692"/>
    </ligand>
</feature>
<feature type="binding site" evidence="1">
    <location>
        <position position="424"/>
    </location>
    <ligand>
        <name>FAD</name>
        <dbReference type="ChEBI" id="CHEBI:57692"/>
    </ligand>
</feature>
<feature type="binding site" evidence="1">
    <location>
        <position position="442"/>
    </location>
    <ligand>
        <name>FAD</name>
        <dbReference type="ChEBI" id="CHEBI:57692"/>
    </ligand>
</feature>
<feature type="binding site" evidence="1">
    <location>
        <position position="788"/>
    </location>
    <ligand>
        <name>Mo-molybdopterin</name>
        <dbReference type="ChEBI" id="CHEBI:71302"/>
    </ligand>
    <ligandPart>
        <name>Mo</name>
        <dbReference type="ChEBI" id="CHEBI:28685"/>
    </ligandPart>
</feature>
<feature type="binding site" evidence="1">
    <location>
        <position position="819"/>
    </location>
    <ligand>
        <name>Mo-molybdopterin</name>
        <dbReference type="ChEBI" id="CHEBI:71302"/>
    </ligand>
    <ligandPart>
        <name>Mo</name>
        <dbReference type="ChEBI" id="CHEBI:28685"/>
    </ligandPart>
</feature>
<feature type="binding site" evidence="1">
    <location>
        <position position="823"/>
    </location>
    <ligand>
        <name>substrate</name>
    </ligand>
</feature>
<feature type="binding site" evidence="1">
    <location>
        <position position="901"/>
    </location>
    <ligand>
        <name>substrate</name>
    </ligand>
</feature>
<feature type="binding site" evidence="1">
    <location>
        <position position="933"/>
    </location>
    <ligand>
        <name>Mo-molybdopterin</name>
        <dbReference type="ChEBI" id="CHEBI:71302"/>
    </ligand>
    <ligandPart>
        <name>Mo</name>
        <dbReference type="ChEBI" id="CHEBI:28685"/>
    </ligandPart>
</feature>
<feature type="binding site" evidence="1">
    <location>
        <position position="935"/>
    </location>
    <ligand>
        <name>substrate</name>
    </ligand>
</feature>
<feature type="binding site" evidence="1">
    <location>
        <position position="1031"/>
    </location>
    <ligand>
        <name>substrate</name>
    </ligand>
</feature>
<feature type="binding site" evidence="1">
    <location>
        <position position="1100"/>
    </location>
    <ligand>
        <name>Mo-molybdopterin</name>
        <dbReference type="ChEBI" id="CHEBI:71302"/>
    </ligand>
    <ligandPart>
        <name>Mo</name>
        <dbReference type="ChEBI" id="CHEBI:28685"/>
    </ligandPart>
</feature>
<feature type="sequence conflict" description="In Ref. 1; AAR99079." evidence="6" ref="1">
    <original>V</original>
    <variation>A</variation>
    <location>
        <position position="401"/>
    </location>
</feature>
<proteinExistence type="evidence at transcript level"/>
<reference key="1">
    <citation type="journal article" date="2004" name="J. Biol. Chem.">
        <title>Tandem orientation of duplicated xanthine dehydrogenase genes from Arabidopsis thaliana: differential gene expression and enzyme activities.</title>
        <authorList>
            <person name="Hesberg C."/>
            <person name="Haensch R."/>
            <person name="Mendel R.R."/>
            <person name="Bittner F."/>
        </authorList>
    </citation>
    <scope>NUCLEOTIDE SEQUENCE [MRNA]</scope>
</reference>
<reference key="2">
    <citation type="journal article" date="1999" name="Nature">
        <title>Sequence and analysis of chromosome 4 of the plant Arabidopsis thaliana.</title>
        <authorList>
            <person name="Mayer K.F.X."/>
            <person name="Schueller C."/>
            <person name="Wambutt R."/>
            <person name="Murphy G."/>
            <person name="Volckaert G."/>
            <person name="Pohl T."/>
            <person name="Duesterhoeft A."/>
            <person name="Stiekema W."/>
            <person name="Entian K.-D."/>
            <person name="Terryn N."/>
            <person name="Harris B."/>
            <person name="Ansorge W."/>
            <person name="Brandt P."/>
            <person name="Grivell L.A."/>
            <person name="Rieger M."/>
            <person name="Weichselgartner M."/>
            <person name="de Simone V."/>
            <person name="Obermaier B."/>
            <person name="Mache R."/>
            <person name="Mueller M."/>
            <person name="Kreis M."/>
            <person name="Delseny M."/>
            <person name="Puigdomenech P."/>
            <person name="Watson M."/>
            <person name="Schmidtheini T."/>
            <person name="Reichert B."/>
            <person name="Portetelle D."/>
            <person name="Perez-Alonso M."/>
            <person name="Boutry M."/>
            <person name="Bancroft I."/>
            <person name="Vos P."/>
            <person name="Hoheisel J."/>
            <person name="Zimmermann W."/>
            <person name="Wedler H."/>
            <person name="Ridley P."/>
            <person name="Langham S.-A."/>
            <person name="McCullagh B."/>
            <person name="Bilham L."/>
            <person name="Robben J."/>
            <person name="van der Schueren J."/>
            <person name="Grymonprez B."/>
            <person name="Chuang Y.-J."/>
            <person name="Vandenbussche F."/>
            <person name="Braeken M."/>
            <person name="Weltjens I."/>
            <person name="Voet M."/>
            <person name="Bastiaens I."/>
            <person name="Aert R."/>
            <person name="Defoor E."/>
            <person name="Weitzenegger T."/>
            <person name="Bothe G."/>
            <person name="Ramsperger U."/>
            <person name="Hilbert H."/>
            <person name="Braun M."/>
            <person name="Holzer E."/>
            <person name="Brandt A."/>
            <person name="Peters S."/>
            <person name="van Staveren M."/>
            <person name="Dirkse W."/>
            <person name="Mooijman P."/>
            <person name="Klein Lankhorst R."/>
            <person name="Rose M."/>
            <person name="Hauf J."/>
            <person name="Koetter P."/>
            <person name="Berneiser S."/>
            <person name="Hempel S."/>
            <person name="Feldpausch M."/>
            <person name="Lamberth S."/>
            <person name="Van den Daele H."/>
            <person name="De Keyser A."/>
            <person name="Buysshaert C."/>
            <person name="Gielen J."/>
            <person name="Villarroel R."/>
            <person name="De Clercq R."/>
            <person name="van Montagu M."/>
            <person name="Rogers J."/>
            <person name="Cronin A."/>
            <person name="Quail M.A."/>
            <person name="Bray-Allen S."/>
            <person name="Clark L."/>
            <person name="Doggett J."/>
            <person name="Hall S."/>
            <person name="Kay M."/>
            <person name="Lennard N."/>
            <person name="McLay K."/>
            <person name="Mayes R."/>
            <person name="Pettett A."/>
            <person name="Rajandream M.A."/>
            <person name="Lyne M."/>
            <person name="Benes V."/>
            <person name="Rechmann S."/>
            <person name="Borkova D."/>
            <person name="Bloecker H."/>
            <person name="Scharfe M."/>
            <person name="Grimm M."/>
            <person name="Loehnert T.-H."/>
            <person name="Dose S."/>
            <person name="de Haan M."/>
            <person name="Maarse A.C."/>
            <person name="Schaefer M."/>
            <person name="Mueller-Auer S."/>
            <person name="Gabel C."/>
            <person name="Fuchs M."/>
            <person name="Fartmann B."/>
            <person name="Granderath K."/>
            <person name="Dauner D."/>
            <person name="Herzl A."/>
            <person name="Neumann S."/>
            <person name="Argiriou A."/>
            <person name="Vitale D."/>
            <person name="Liguori R."/>
            <person name="Piravandi E."/>
            <person name="Massenet O."/>
            <person name="Quigley F."/>
            <person name="Clabauld G."/>
            <person name="Muendlein A."/>
            <person name="Felber R."/>
            <person name="Schnabl S."/>
            <person name="Hiller R."/>
            <person name="Schmidt W."/>
            <person name="Lecharny A."/>
            <person name="Aubourg S."/>
            <person name="Chefdor F."/>
            <person name="Cooke R."/>
            <person name="Berger C."/>
            <person name="Monfort A."/>
            <person name="Casacuberta E."/>
            <person name="Gibbons T."/>
            <person name="Weber N."/>
            <person name="Vandenbol M."/>
            <person name="Bargues M."/>
            <person name="Terol J."/>
            <person name="Torres A."/>
            <person name="Perez-Perez A."/>
            <person name="Purnelle B."/>
            <person name="Bent E."/>
            <person name="Johnson S."/>
            <person name="Tacon D."/>
            <person name="Jesse T."/>
            <person name="Heijnen L."/>
            <person name="Schwarz S."/>
            <person name="Scholler P."/>
            <person name="Heber S."/>
            <person name="Francs P."/>
            <person name="Bielke C."/>
            <person name="Frishman D."/>
            <person name="Haase D."/>
            <person name="Lemcke K."/>
            <person name="Mewes H.-W."/>
            <person name="Stocker S."/>
            <person name="Zaccaria P."/>
            <person name="Bevan M."/>
            <person name="Wilson R.K."/>
            <person name="de la Bastide M."/>
            <person name="Habermann K."/>
            <person name="Parnell L."/>
            <person name="Dedhia N."/>
            <person name="Gnoj L."/>
            <person name="Schutz K."/>
            <person name="Huang E."/>
            <person name="Spiegel L."/>
            <person name="Sekhon M."/>
            <person name="Murray J."/>
            <person name="Sheet P."/>
            <person name="Cordes M."/>
            <person name="Abu-Threideh J."/>
            <person name="Stoneking T."/>
            <person name="Kalicki J."/>
            <person name="Graves T."/>
            <person name="Harmon G."/>
            <person name="Edwards J."/>
            <person name="Latreille P."/>
            <person name="Courtney L."/>
            <person name="Cloud J."/>
            <person name="Abbott A."/>
            <person name="Scott K."/>
            <person name="Johnson D."/>
            <person name="Minx P."/>
            <person name="Bentley D."/>
            <person name="Fulton B."/>
            <person name="Miller N."/>
            <person name="Greco T."/>
            <person name="Kemp K."/>
            <person name="Kramer J."/>
            <person name="Fulton L."/>
            <person name="Mardis E."/>
            <person name="Dante M."/>
            <person name="Pepin K."/>
            <person name="Hillier L.W."/>
            <person name="Nelson J."/>
            <person name="Spieth J."/>
            <person name="Ryan E."/>
            <person name="Andrews S."/>
            <person name="Geisel C."/>
            <person name="Layman D."/>
            <person name="Du H."/>
            <person name="Ali J."/>
            <person name="Berghoff A."/>
            <person name="Jones K."/>
            <person name="Drone K."/>
            <person name="Cotton M."/>
            <person name="Joshu C."/>
            <person name="Antonoiu B."/>
            <person name="Zidanic M."/>
            <person name="Strong C."/>
            <person name="Sun H."/>
            <person name="Lamar B."/>
            <person name="Yordan C."/>
            <person name="Ma P."/>
            <person name="Zhong J."/>
            <person name="Preston R."/>
            <person name="Vil D."/>
            <person name="Shekher M."/>
            <person name="Matero A."/>
            <person name="Shah R."/>
            <person name="Swaby I.K."/>
            <person name="O'Shaughnessy A."/>
            <person name="Rodriguez M."/>
            <person name="Hoffman J."/>
            <person name="Till S."/>
            <person name="Granat S."/>
            <person name="Shohdy N."/>
            <person name="Hasegawa A."/>
            <person name="Hameed A."/>
            <person name="Lodhi M."/>
            <person name="Johnson A."/>
            <person name="Chen E."/>
            <person name="Marra M.A."/>
            <person name="Martienssen R."/>
            <person name="McCombie W.R."/>
        </authorList>
    </citation>
    <scope>NUCLEOTIDE SEQUENCE [LARGE SCALE GENOMIC DNA]</scope>
    <source>
        <strain>cv. Columbia</strain>
    </source>
</reference>
<reference key="3">
    <citation type="journal article" date="2017" name="Plant J.">
        <title>Araport11: a complete reannotation of the Arabidopsis thaliana reference genome.</title>
        <authorList>
            <person name="Cheng C.Y."/>
            <person name="Krishnakumar V."/>
            <person name="Chan A.P."/>
            <person name="Thibaud-Nissen F."/>
            <person name="Schobel S."/>
            <person name="Town C.D."/>
        </authorList>
    </citation>
    <scope>GENOME REANNOTATION</scope>
    <source>
        <strain>cv. Columbia</strain>
    </source>
</reference>
<reference key="4">
    <citation type="journal article" date="2007" name="Plant Cell Physiol.">
        <title>The RNAi-mediated silencing of xanthine dehydrogenase impairs growth and fertility and accelerates leaf senescence in transgenic Arabidopsis plants.</title>
        <authorList>
            <person name="Nakagawa A."/>
            <person name="Sakamoto S."/>
            <person name="Takahashi M."/>
            <person name="Morikawa H."/>
            <person name="Sakamoto A."/>
        </authorList>
    </citation>
    <scope>FUNCTION</scope>
</reference>
<protein>
    <recommendedName>
        <fullName>Xanthine dehydrogenase 2</fullName>
        <shortName>AtXDH2</shortName>
        <ecNumber evidence="2">1.17.1.4</ecNumber>
    </recommendedName>
</protein>